<evidence type="ECO:0000250" key="1"/>
<evidence type="ECO:0000269" key="2">
    <source>
    </source>
</evidence>
<evidence type="ECO:0000305" key="3"/>
<reference key="1">
    <citation type="journal article" date="1998" name="Nature">
        <title>Deciphering the biology of Mycobacterium tuberculosis from the complete genome sequence.</title>
        <authorList>
            <person name="Cole S.T."/>
            <person name="Brosch R."/>
            <person name="Parkhill J."/>
            <person name="Garnier T."/>
            <person name="Churcher C.M."/>
            <person name="Harris D.E."/>
            <person name="Gordon S.V."/>
            <person name="Eiglmeier K."/>
            <person name="Gas S."/>
            <person name="Barry C.E. III"/>
            <person name="Tekaia F."/>
            <person name="Badcock K."/>
            <person name="Basham D."/>
            <person name="Brown D."/>
            <person name="Chillingworth T."/>
            <person name="Connor R."/>
            <person name="Davies R.M."/>
            <person name="Devlin K."/>
            <person name="Feltwell T."/>
            <person name="Gentles S."/>
            <person name="Hamlin N."/>
            <person name="Holroyd S."/>
            <person name="Hornsby T."/>
            <person name="Jagels K."/>
            <person name="Krogh A."/>
            <person name="McLean J."/>
            <person name="Moule S."/>
            <person name="Murphy L.D."/>
            <person name="Oliver S."/>
            <person name="Osborne J."/>
            <person name="Quail M.A."/>
            <person name="Rajandream M.A."/>
            <person name="Rogers J."/>
            <person name="Rutter S."/>
            <person name="Seeger K."/>
            <person name="Skelton S."/>
            <person name="Squares S."/>
            <person name="Squares R."/>
            <person name="Sulston J.E."/>
            <person name="Taylor K."/>
            <person name="Whitehead S."/>
            <person name="Barrell B.G."/>
        </authorList>
    </citation>
    <scope>NUCLEOTIDE SEQUENCE [LARGE SCALE GENOMIC DNA]</scope>
    <source>
        <strain>ATCC 25618 / H37Rv</strain>
    </source>
</reference>
<reference key="2">
    <citation type="journal article" date="2010" name="BMC Microbiol.">
        <title>Inositol monophosphate phosphatase genes of Mycobacterium tuberculosis.</title>
        <authorList>
            <person name="Movahedzadeh F."/>
            <person name="Wheeler P.R."/>
            <person name="Dinadayala P."/>
            <person name="Av-Gay Y."/>
            <person name="Parish T."/>
            <person name="Daffe M."/>
            <person name="Stoker N.G."/>
        </authorList>
    </citation>
    <scope>DISRUPTION PHENOTYPE</scope>
    <scope>INDUCTION</scope>
    <source>
        <strain>ATCC 25618 / H37Rv</strain>
    </source>
</reference>
<organism>
    <name type="scientific">Mycobacterium tuberculosis (strain ATCC 25618 / H37Rv)</name>
    <dbReference type="NCBI Taxonomy" id="83332"/>
    <lineage>
        <taxon>Bacteria</taxon>
        <taxon>Bacillati</taxon>
        <taxon>Actinomycetota</taxon>
        <taxon>Actinomycetes</taxon>
        <taxon>Mycobacteriales</taxon>
        <taxon>Mycobacteriaceae</taxon>
        <taxon>Mycobacterium</taxon>
        <taxon>Mycobacterium tuberculosis complex</taxon>
    </lineage>
</organism>
<feature type="chain" id="PRO_0000404321" description="Probable inositol 1-monophosphatase ImpA">
    <location>
        <begin position="1"/>
        <end position="270"/>
    </location>
</feature>
<feature type="binding site" evidence="1">
    <location>
        <position position="69"/>
    </location>
    <ligand>
        <name>Mg(2+)</name>
        <dbReference type="ChEBI" id="CHEBI:18420"/>
        <label>1</label>
    </ligand>
</feature>
<feature type="binding site" evidence="1">
    <location>
        <position position="69"/>
    </location>
    <ligand>
        <name>substrate</name>
    </ligand>
</feature>
<feature type="binding site" evidence="1">
    <location>
        <position position="85"/>
    </location>
    <ligand>
        <name>Mg(2+)</name>
        <dbReference type="ChEBI" id="CHEBI:18420"/>
        <label>1</label>
    </ligand>
</feature>
<feature type="binding site" evidence="1">
    <location>
        <position position="85"/>
    </location>
    <ligand>
        <name>Mg(2+)</name>
        <dbReference type="ChEBI" id="CHEBI:18420"/>
        <label>2</label>
    </ligand>
</feature>
<feature type="binding site" evidence="1">
    <location>
        <begin position="87"/>
        <end position="90"/>
    </location>
    <ligand>
        <name>substrate</name>
    </ligand>
</feature>
<feature type="binding site" evidence="1">
    <location>
        <position position="87"/>
    </location>
    <ligand>
        <name>Mg(2+)</name>
        <dbReference type="ChEBI" id="CHEBI:18420"/>
        <label>1</label>
    </ligand>
</feature>
<feature type="binding site" evidence="1">
    <location>
        <position position="88"/>
    </location>
    <ligand>
        <name>Mg(2+)</name>
        <dbReference type="ChEBI" id="CHEBI:18420"/>
        <label>2</label>
    </ligand>
</feature>
<feature type="binding site" evidence="1">
    <location>
        <position position="187"/>
    </location>
    <ligand>
        <name>substrate</name>
    </ligand>
</feature>
<feature type="binding site" evidence="1">
    <location>
        <position position="216"/>
    </location>
    <ligand>
        <name>Mg(2+)</name>
        <dbReference type="ChEBI" id="CHEBI:18420"/>
        <label>2</label>
    </ligand>
</feature>
<feature type="binding site" evidence="1">
    <location>
        <position position="216"/>
    </location>
    <ligand>
        <name>substrate</name>
    </ligand>
</feature>
<sequence>MHLDSLVAPLVEQASAILDAATALFLVGHRADSAVRKKGNDFATEVDLAIERQVVAALVAATGIEVHGEEFGGPAVDSRWVWVLDPIDGTINYAAGSPLAAILLGLLHDGVPVAGLTWMPFTDPRYTAVAGGPLIKNGVPQPPLADAELANVLVGVGTFSADSRGQFPGRYRLAVLEKLSRVSSRLRMHGSTGIDLVFVADGILGGAISFGGHVWDHAAGVALVRAAGGVVTDLAGQPWTPASRSALAGPPRVHAQILEILGSIGEPEDY</sequence>
<comment type="function">
    <text evidence="1">Catalyzes the dephosphorylation of inositol 1-phosphate (I-1-P) to yield free myo-inositol, a key metabolite in mycobacteria.</text>
</comment>
<comment type="catalytic activity">
    <reaction>
        <text>a myo-inositol phosphate + H2O = myo-inositol + phosphate</text>
        <dbReference type="Rhea" id="RHEA:24056"/>
        <dbReference type="ChEBI" id="CHEBI:15377"/>
        <dbReference type="ChEBI" id="CHEBI:17268"/>
        <dbReference type="ChEBI" id="CHEBI:43474"/>
        <dbReference type="ChEBI" id="CHEBI:84139"/>
        <dbReference type="EC" id="3.1.3.25"/>
    </reaction>
</comment>
<comment type="cofactor">
    <cofactor evidence="1">
        <name>Mg(2+)</name>
        <dbReference type="ChEBI" id="CHEBI:18420"/>
    </cofactor>
</comment>
<comment type="pathway">
    <text>Polyol metabolism; myo-inositol biosynthesis; myo-inositol from D-glucose 6-phosphate: step 2/2.</text>
</comment>
<comment type="induction">
    <text evidence="2">When comparing gene expression levels of the four IMPase family genes in exponential cultures of M.tuberculosis, the level of cysQ is the highest, almost equal to sigA; impA and impC are expressed at approximately 40% of this level, while suhB is lowest, at 12% of the cysQ level.</text>
</comment>
<comment type="disruption phenotype">
    <text evidence="2">Strains lacking this gene show no difference in colony morphology and no differences in levels of phosphatidylinosotol mannosides (PIMs), lipomannan (LM), lipoarabinomannan (LAM) or mycothiol (in the absence of exogenous inositol).</text>
</comment>
<comment type="similarity">
    <text evidence="3">Belongs to the inositol monophosphatase superfamily.</text>
</comment>
<protein>
    <recommendedName>
        <fullName>Probable inositol 1-monophosphatase ImpA</fullName>
        <shortName>I-1-Pase</shortName>
        <shortName>IMPase</shortName>
        <shortName>Inositol-1-phosphatase</shortName>
        <ecNumber>3.1.3.25</ecNumber>
    </recommendedName>
</protein>
<name>IMPA_MYCTU</name>
<keyword id="KW-0378">Hydrolase</keyword>
<keyword id="KW-0460">Magnesium</keyword>
<keyword id="KW-0479">Metal-binding</keyword>
<keyword id="KW-1185">Reference proteome</keyword>
<gene>
    <name type="primary">impA</name>
    <name type="ordered locus">Rv1604</name>
</gene>
<proteinExistence type="evidence at transcript level"/>
<accession>O53907</accession>
<accession>L0TA49</accession>
<dbReference type="EC" id="3.1.3.25"/>
<dbReference type="EMBL" id="AL123456">
    <property type="protein sequence ID" value="CCP44368.1"/>
    <property type="molecule type" value="Genomic_DNA"/>
</dbReference>
<dbReference type="PIR" id="C70819">
    <property type="entry name" value="C70819"/>
</dbReference>
<dbReference type="RefSeq" id="NP_216120.1">
    <property type="nucleotide sequence ID" value="NC_000962.3"/>
</dbReference>
<dbReference type="RefSeq" id="WP_003911572.1">
    <property type="nucleotide sequence ID" value="NZ_NVQJ01000016.1"/>
</dbReference>
<dbReference type="SMR" id="O53907"/>
<dbReference type="FunCoup" id="O53907">
    <property type="interactions" value="8"/>
</dbReference>
<dbReference type="STRING" id="83332.Rv1604"/>
<dbReference type="PaxDb" id="83332-Rv1604"/>
<dbReference type="DNASU" id="885567"/>
<dbReference type="GeneID" id="885567"/>
<dbReference type="KEGG" id="mtu:Rv1604"/>
<dbReference type="KEGG" id="mtv:RVBD_1604"/>
<dbReference type="TubercuList" id="Rv1604"/>
<dbReference type="eggNOG" id="COG0483">
    <property type="taxonomic scope" value="Bacteria"/>
</dbReference>
<dbReference type="InParanoid" id="O53907"/>
<dbReference type="OrthoDB" id="9772456at2"/>
<dbReference type="PhylomeDB" id="O53907"/>
<dbReference type="UniPathway" id="UPA00823">
    <property type="reaction ID" value="UER00788"/>
</dbReference>
<dbReference type="Proteomes" id="UP000001584">
    <property type="component" value="Chromosome"/>
</dbReference>
<dbReference type="GO" id="GO:0005886">
    <property type="term" value="C:plasma membrane"/>
    <property type="evidence" value="ECO:0007005"/>
    <property type="project" value="MTBBASE"/>
</dbReference>
<dbReference type="GO" id="GO:0008934">
    <property type="term" value="F:inositol monophosphate 1-phosphatase activity"/>
    <property type="evidence" value="ECO:0000318"/>
    <property type="project" value="GO_Central"/>
</dbReference>
<dbReference type="GO" id="GO:0046872">
    <property type="term" value="F:metal ion binding"/>
    <property type="evidence" value="ECO:0007669"/>
    <property type="project" value="UniProtKB-KW"/>
</dbReference>
<dbReference type="GO" id="GO:0006021">
    <property type="term" value="P:inositol biosynthetic process"/>
    <property type="evidence" value="ECO:0007669"/>
    <property type="project" value="UniProtKB-UniPathway"/>
</dbReference>
<dbReference type="GO" id="GO:0006020">
    <property type="term" value="P:inositol metabolic process"/>
    <property type="evidence" value="ECO:0000318"/>
    <property type="project" value="GO_Central"/>
</dbReference>
<dbReference type="GO" id="GO:0046854">
    <property type="term" value="P:phosphatidylinositol phosphate biosynthetic process"/>
    <property type="evidence" value="ECO:0007669"/>
    <property type="project" value="InterPro"/>
</dbReference>
<dbReference type="GO" id="GO:0007165">
    <property type="term" value="P:signal transduction"/>
    <property type="evidence" value="ECO:0000318"/>
    <property type="project" value="GO_Central"/>
</dbReference>
<dbReference type="CDD" id="cd01637">
    <property type="entry name" value="IMPase_like"/>
    <property type="match status" value="1"/>
</dbReference>
<dbReference type="Gene3D" id="3.40.190.80">
    <property type="match status" value="1"/>
</dbReference>
<dbReference type="Gene3D" id="3.30.540.10">
    <property type="entry name" value="Fructose-1,6-Bisphosphatase, subunit A, domain 1"/>
    <property type="match status" value="1"/>
</dbReference>
<dbReference type="InterPro" id="IPR000760">
    <property type="entry name" value="Inositol_monophosphatase-like"/>
</dbReference>
<dbReference type="InterPro" id="IPR020550">
    <property type="entry name" value="Inositol_monophosphatase_CS"/>
</dbReference>
<dbReference type="PANTHER" id="PTHR20854">
    <property type="entry name" value="INOSITOL MONOPHOSPHATASE"/>
    <property type="match status" value="1"/>
</dbReference>
<dbReference type="PANTHER" id="PTHR20854:SF4">
    <property type="entry name" value="INOSITOL-1-MONOPHOSPHATASE-RELATED"/>
    <property type="match status" value="1"/>
</dbReference>
<dbReference type="Pfam" id="PF00459">
    <property type="entry name" value="Inositol_P"/>
    <property type="match status" value="1"/>
</dbReference>
<dbReference type="PRINTS" id="PR00377">
    <property type="entry name" value="IMPHPHTASES"/>
</dbReference>
<dbReference type="SUPFAM" id="SSF56655">
    <property type="entry name" value="Carbohydrate phosphatase"/>
    <property type="match status" value="1"/>
</dbReference>
<dbReference type="PROSITE" id="PS00630">
    <property type="entry name" value="IMP_2"/>
    <property type="match status" value="1"/>
</dbReference>